<gene>
    <name evidence="1" type="primary">adk</name>
    <name type="ordered locus">Adeh_1925</name>
</gene>
<organism>
    <name type="scientific">Anaeromyxobacter dehalogenans (strain 2CP-C)</name>
    <dbReference type="NCBI Taxonomy" id="290397"/>
    <lineage>
        <taxon>Bacteria</taxon>
        <taxon>Pseudomonadati</taxon>
        <taxon>Myxococcota</taxon>
        <taxon>Myxococcia</taxon>
        <taxon>Myxococcales</taxon>
        <taxon>Cystobacterineae</taxon>
        <taxon>Anaeromyxobacteraceae</taxon>
        <taxon>Anaeromyxobacter</taxon>
    </lineage>
</organism>
<reference key="1">
    <citation type="submission" date="2006-01" db="EMBL/GenBank/DDBJ databases">
        <title>Complete sequence of Anaeromyxobacter dehalogenans 2CP-C.</title>
        <authorList>
            <person name="Copeland A."/>
            <person name="Lucas S."/>
            <person name="Lapidus A."/>
            <person name="Barry K."/>
            <person name="Detter J.C."/>
            <person name="Glavina T."/>
            <person name="Hammon N."/>
            <person name="Israni S."/>
            <person name="Pitluck S."/>
            <person name="Brettin T."/>
            <person name="Bruce D."/>
            <person name="Han C."/>
            <person name="Tapia R."/>
            <person name="Gilna P."/>
            <person name="Kiss H."/>
            <person name="Schmutz J."/>
            <person name="Larimer F."/>
            <person name="Land M."/>
            <person name="Kyrpides N."/>
            <person name="Anderson I."/>
            <person name="Sanford R.A."/>
            <person name="Ritalahti K.M."/>
            <person name="Thomas H.S."/>
            <person name="Kirby J.R."/>
            <person name="Zhulin I.B."/>
            <person name="Loeffler F.E."/>
            <person name="Richardson P."/>
        </authorList>
    </citation>
    <scope>NUCLEOTIDE SEQUENCE [LARGE SCALE GENOMIC DNA]</scope>
    <source>
        <strain>2CP-C</strain>
    </source>
</reference>
<name>KAD_ANADE</name>
<evidence type="ECO:0000255" key="1">
    <source>
        <dbReference type="HAMAP-Rule" id="MF_00235"/>
    </source>
</evidence>
<sequence>MILILLGPPGAGKGTQAKLLSTELGIPHISTGDMFRDHKARGTEIGKQVQAIMDGGGLVTDDITNAMVKERLSRPDVAPGFILDGYPRTVVQAEYLDGLLRSLGRSIGRALSYEVAEELVVERISGRRSCPRCGAVYHVSQNPPRRAGYCDRDDAELVQREDDKPENVRKRMQEYGTKTEPLKRYYRDRGELTEVEGVGTPEGILAATKKVLGR</sequence>
<comment type="function">
    <text evidence="1">Catalyzes the reversible transfer of the terminal phosphate group between ATP and AMP. Plays an important role in cellular energy homeostasis and in adenine nucleotide metabolism.</text>
</comment>
<comment type="catalytic activity">
    <reaction evidence="1">
        <text>AMP + ATP = 2 ADP</text>
        <dbReference type="Rhea" id="RHEA:12973"/>
        <dbReference type="ChEBI" id="CHEBI:30616"/>
        <dbReference type="ChEBI" id="CHEBI:456215"/>
        <dbReference type="ChEBI" id="CHEBI:456216"/>
        <dbReference type="EC" id="2.7.4.3"/>
    </reaction>
</comment>
<comment type="pathway">
    <text evidence="1">Purine metabolism; AMP biosynthesis via salvage pathway; AMP from ADP: step 1/1.</text>
</comment>
<comment type="subunit">
    <text evidence="1">Monomer.</text>
</comment>
<comment type="subcellular location">
    <subcellularLocation>
        <location evidence="1">Cytoplasm</location>
    </subcellularLocation>
</comment>
<comment type="domain">
    <text evidence="1">Consists of three domains, a large central CORE domain and two small peripheral domains, NMPbind and LID, which undergo movements during catalysis. The LID domain closes over the site of phosphoryl transfer upon ATP binding. Assembling and dissambling the active center during each catalytic cycle provides an effective means to prevent ATP hydrolysis. Some bacteria have evolved a zinc-coordinating structure that stabilizes the LID domain.</text>
</comment>
<comment type="similarity">
    <text evidence="1">Belongs to the adenylate kinase family.</text>
</comment>
<protein>
    <recommendedName>
        <fullName evidence="1">Adenylate kinase</fullName>
        <shortName evidence="1">AK</shortName>
        <ecNumber evidence="1">2.7.4.3</ecNumber>
    </recommendedName>
    <alternativeName>
        <fullName evidence="1">ATP-AMP transphosphorylase</fullName>
    </alternativeName>
    <alternativeName>
        <fullName evidence="1">ATP:AMP phosphotransferase</fullName>
    </alternativeName>
    <alternativeName>
        <fullName evidence="1">Adenylate monophosphate kinase</fullName>
    </alternativeName>
</protein>
<accession>Q2IJ70</accession>
<keyword id="KW-0067">ATP-binding</keyword>
<keyword id="KW-0963">Cytoplasm</keyword>
<keyword id="KW-0418">Kinase</keyword>
<keyword id="KW-0479">Metal-binding</keyword>
<keyword id="KW-0545">Nucleotide biosynthesis</keyword>
<keyword id="KW-0547">Nucleotide-binding</keyword>
<keyword id="KW-1185">Reference proteome</keyword>
<keyword id="KW-0808">Transferase</keyword>
<keyword id="KW-0862">Zinc</keyword>
<proteinExistence type="inferred from homology"/>
<dbReference type="EC" id="2.7.4.3" evidence="1"/>
<dbReference type="EMBL" id="CP000251">
    <property type="protein sequence ID" value="ABC81696.1"/>
    <property type="molecule type" value="Genomic_DNA"/>
</dbReference>
<dbReference type="RefSeq" id="WP_011420979.1">
    <property type="nucleotide sequence ID" value="NC_007760.1"/>
</dbReference>
<dbReference type="SMR" id="Q2IJ70"/>
<dbReference type="STRING" id="290397.Adeh_1925"/>
<dbReference type="KEGG" id="ade:Adeh_1925"/>
<dbReference type="eggNOG" id="COG0563">
    <property type="taxonomic scope" value="Bacteria"/>
</dbReference>
<dbReference type="HOGENOM" id="CLU_032354_1_2_7"/>
<dbReference type="OrthoDB" id="9805030at2"/>
<dbReference type="UniPathway" id="UPA00588">
    <property type="reaction ID" value="UER00649"/>
</dbReference>
<dbReference type="Proteomes" id="UP000001935">
    <property type="component" value="Chromosome"/>
</dbReference>
<dbReference type="GO" id="GO:0005737">
    <property type="term" value="C:cytoplasm"/>
    <property type="evidence" value="ECO:0007669"/>
    <property type="project" value="UniProtKB-SubCell"/>
</dbReference>
<dbReference type="GO" id="GO:0004017">
    <property type="term" value="F:adenylate kinase activity"/>
    <property type="evidence" value="ECO:0007669"/>
    <property type="project" value="UniProtKB-UniRule"/>
</dbReference>
<dbReference type="GO" id="GO:0005524">
    <property type="term" value="F:ATP binding"/>
    <property type="evidence" value="ECO:0007669"/>
    <property type="project" value="UniProtKB-UniRule"/>
</dbReference>
<dbReference type="GO" id="GO:0008270">
    <property type="term" value="F:zinc ion binding"/>
    <property type="evidence" value="ECO:0007669"/>
    <property type="project" value="UniProtKB-UniRule"/>
</dbReference>
<dbReference type="GO" id="GO:0044209">
    <property type="term" value="P:AMP salvage"/>
    <property type="evidence" value="ECO:0007669"/>
    <property type="project" value="UniProtKB-UniRule"/>
</dbReference>
<dbReference type="CDD" id="cd01428">
    <property type="entry name" value="ADK"/>
    <property type="match status" value="1"/>
</dbReference>
<dbReference type="FunFam" id="3.40.50.300:FF:000106">
    <property type="entry name" value="Adenylate kinase mitochondrial"/>
    <property type="match status" value="1"/>
</dbReference>
<dbReference type="Gene3D" id="3.40.50.300">
    <property type="entry name" value="P-loop containing nucleotide triphosphate hydrolases"/>
    <property type="match status" value="1"/>
</dbReference>
<dbReference type="HAMAP" id="MF_00235">
    <property type="entry name" value="Adenylate_kinase_Adk"/>
    <property type="match status" value="1"/>
</dbReference>
<dbReference type="InterPro" id="IPR006259">
    <property type="entry name" value="Adenyl_kin_sub"/>
</dbReference>
<dbReference type="InterPro" id="IPR000850">
    <property type="entry name" value="Adenylat/UMP-CMP_kin"/>
</dbReference>
<dbReference type="InterPro" id="IPR033690">
    <property type="entry name" value="Adenylat_kinase_CS"/>
</dbReference>
<dbReference type="InterPro" id="IPR007862">
    <property type="entry name" value="Adenylate_kinase_lid-dom"/>
</dbReference>
<dbReference type="InterPro" id="IPR027417">
    <property type="entry name" value="P-loop_NTPase"/>
</dbReference>
<dbReference type="NCBIfam" id="TIGR01351">
    <property type="entry name" value="adk"/>
    <property type="match status" value="1"/>
</dbReference>
<dbReference type="NCBIfam" id="NF001380">
    <property type="entry name" value="PRK00279.1-2"/>
    <property type="match status" value="1"/>
</dbReference>
<dbReference type="NCBIfam" id="NF001381">
    <property type="entry name" value="PRK00279.1-3"/>
    <property type="match status" value="1"/>
</dbReference>
<dbReference type="NCBIfam" id="NF011100">
    <property type="entry name" value="PRK14527.1"/>
    <property type="match status" value="1"/>
</dbReference>
<dbReference type="PANTHER" id="PTHR23359">
    <property type="entry name" value="NUCLEOTIDE KINASE"/>
    <property type="match status" value="1"/>
</dbReference>
<dbReference type="Pfam" id="PF00406">
    <property type="entry name" value="ADK"/>
    <property type="match status" value="1"/>
</dbReference>
<dbReference type="Pfam" id="PF05191">
    <property type="entry name" value="ADK_lid"/>
    <property type="match status" value="1"/>
</dbReference>
<dbReference type="PRINTS" id="PR00094">
    <property type="entry name" value="ADENYLTKNASE"/>
</dbReference>
<dbReference type="SUPFAM" id="SSF52540">
    <property type="entry name" value="P-loop containing nucleoside triphosphate hydrolases"/>
    <property type="match status" value="1"/>
</dbReference>
<dbReference type="PROSITE" id="PS00113">
    <property type="entry name" value="ADENYLATE_KINASE"/>
    <property type="match status" value="1"/>
</dbReference>
<feature type="chain" id="PRO_1000021707" description="Adenylate kinase">
    <location>
        <begin position="1"/>
        <end position="214"/>
    </location>
</feature>
<feature type="region of interest" description="NMP" evidence="1">
    <location>
        <begin position="30"/>
        <end position="59"/>
    </location>
</feature>
<feature type="region of interest" description="LID" evidence="1">
    <location>
        <begin position="126"/>
        <end position="163"/>
    </location>
</feature>
<feature type="binding site" evidence="1">
    <location>
        <begin position="10"/>
        <end position="15"/>
    </location>
    <ligand>
        <name>ATP</name>
        <dbReference type="ChEBI" id="CHEBI:30616"/>
    </ligand>
</feature>
<feature type="binding site" evidence="1">
    <location>
        <position position="31"/>
    </location>
    <ligand>
        <name>AMP</name>
        <dbReference type="ChEBI" id="CHEBI:456215"/>
    </ligand>
</feature>
<feature type="binding site" evidence="1">
    <location>
        <position position="36"/>
    </location>
    <ligand>
        <name>AMP</name>
        <dbReference type="ChEBI" id="CHEBI:456215"/>
    </ligand>
</feature>
<feature type="binding site" evidence="1">
    <location>
        <begin position="57"/>
        <end position="59"/>
    </location>
    <ligand>
        <name>AMP</name>
        <dbReference type="ChEBI" id="CHEBI:456215"/>
    </ligand>
</feature>
<feature type="binding site" evidence="1">
    <location>
        <begin position="85"/>
        <end position="88"/>
    </location>
    <ligand>
        <name>AMP</name>
        <dbReference type="ChEBI" id="CHEBI:456215"/>
    </ligand>
</feature>
<feature type="binding site" evidence="1">
    <location>
        <position position="92"/>
    </location>
    <ligand>
        <name>AMP</name>
        <dbReference type="ChEBI" id="CHEBI:456215"/>
    </ligand>
</feature>
<feature type="binding site" evidence="1">
    <location>
        <position position="127"/>
    </location>
    <ligand>
        <name>ATP</name>
        <dbReference type="ChEBI" id="CHEBI:30616"/>
    </ligand>
</feature>
<feature type="binding site" evidence="1">
    <location>
        <position position="130"/>
    </location>
    <ligand>
        <name>Zn(2+)</name>
        <dbReference type="ChEBI" id="CHEBI:29105"/>
        <note>structural</note>
    </ligand>
</feature>
<feature type="binding site" evidence="1">
    <location>
        <position position="133"/>
    </location>
    <ligand>
        <name>Zn(2+)</name>
        <dbReference type="ChEBI" id="CHEBI:29105"/>
        <note>structural</note>
    </ligand>
</feature>
<feature type="binding site" evidence="1">
    <location>
        <begin position="136"/>
        <end position="137"/>
    </location>
    <ligand>
        <name>ATP</name>
        <dbReference type="ChEBI" id="CHEBI:30616"/>
    </ligand>
</feature>
<feature type="binding site" evidence="1">
    <location>
        <position position="150"/>
    </location>
    <ligand>
        <name>Zn(2+)</name>
        <dbReference type="ChEBI" id="CHEBI:29105"/>
        <note>structural</note>
    </ligand>
</feature>
<feature type="binding site" evidence="1">
    <location>
        <position position="153"/>
    </location>
    <ligand>
        <name>Zn(2+)</name>
        <dbReference type="ChEBI" id="CHEBI:29105"/>
        <note>structural</note>
    </ligand>
</feature>
<feature type="binding site" evidence="1">
    <location>
        <position position="160"/>
    </location>
    <ligand>
        <name>AMP</name>
        <dbReference type="ChEBI" id="CHEBI:456215"/>
    </ligand>
</feature>
<feature type="binding site" evidence="1">
    <location>
        <position position="171"/>
    </location>
    <ligand>
        <name>AMP</name>
        <dbReference type="ChEBI" id="CHEBI:456215"/>
    </ligand>
</feature>
<feature type="binding site" evidence="1">
    <location>
        <position position="199"/>
    </location>
    <ligand>
        <name>ATP</name>
        <dbReference type="ChEBI" id="CHEBI:30616"/>
    </ligand>
</feature>